<gene>
    <name evidence="1" type="primary">fusA</name>
    <name type="ordered locus">ESA_04401</name>
</gene>
<sequence length="704" mass="77680">MARTTPIARYRNIGISAHIDAGKTTTTERILFYTGVNHKIGEVHDGAATMDWMEQEQERGITITSAATTAFWSGMAKQYEPHRINIIDTPGHVDFTIEVERSMRVLDGAVMVYCAVGGVQPQSETVWRQANKYKVPRIAFVNKMDRMGANFLKVVGQIKTRLGANPVPLQLAIGAEEGFTGVVDLVKMKAINWNDADQGVTFEYEDIPADMQDLADEWHQNLIESAAEASEELMEKYLGGEELTEEEIKKALRQRVLNNEIILVTCGSAFKNKGVQAMLDAVIDYLPSPVDVPAINGILDDGKDTPAERHASDEEPFSALAFKIATDPFVGNLTFFRVYSGVVNSGDTILNSVKSARERFGRIVQMHANKREEIKEVRAGDIAAAIGLKDVTTGDTLCNPDHPIILERMEFPEPVISIAVEPKTKADQEKMGLALGRLAKEDPSFRVWTDEESNQTIIAGMGELHLDIIVDRMKREFNVEANVGKPQVAYREAIRSKVTDIEGKHAKQSGGRGQYGHVVIDMYPLEPGSNPKGYEFINDIKGGVIPGEYIPAVDKGIQEQLKSGPLAGYPVVDIGIRLHFGSYHDVDSSELAFKLAASIAFKEGFKKAKPVLLEPIMKVEVETPEENTGDVIGDLSRRRGMLRGQESEVTGVKIHAEVPLSEMFGYATQLRSLTKGRASYTMEFLKYDDAPNNVAQAVIEARGK</sequence>
<reference key="1">
    <citation type="journal article" date="2010" name="PLoS ONE">
        <title>Genome sequence of Cronobacter sakazakii BAA-894 and comparative genomic hybridization analysis with other Cronobacter species.</title>
        <authorList>
            <person name="Kucerova E."/>
            <person name="Clifton S.W."/>
            <person name="Xia X.Q."/>
            <person name="Long F."/>
            <person name="Porwollik S."/>
            <person name="Fulton L."/>
            <person name="Fronick C."/>
            <person name="Minx P."/>
            <person name="Kyung K."/>
            <person name="Warren W."/>
            <person name="Fulton R."/>
            <person name="Feng D."/>
            <person name="Wollam A."/>
            <person name="Shah N."/>
            <person name="Bhonagiri V."/>
            <person name="Nash W.E."/>
            <person name="Hallsworth-Pepin K."/>
            <person name="Wilson R.K."/>
            <person name="McClelland M."/>
            <person name="Forsythe S.J."/>
        </authorList>
    </citation>
    <scope>NUCLEOTIDE SEQUENCE [LARGE SCALE GENOMIC DNA]</scope>
    <source>
        <strain>ATCC BAA-894</strain>
    </source>
</reference>
<keyword id="KW-0963">Cytoplasm</keyword>
<keyword id="KW-0251">Elongation factor</keyword>
<keyword id="KW-0342">GTP-binding</keyword>
<keyword id="KW-0547">Nucleotide-binding</keyword>
<keyword id="KW-0648">Protein biosynthesis</keyword>
<keyword id="KW-1185">Reference proteome</keyword>
<evidence type="ECO:0000255" key="1">
    <source>
        <dbReference type="HAMAP-Rule" id="MF_00054"/>
    </source>
</evidence>
<feature type="chain" id="PRO_1000008822" description="Elongation factor G">
    <location>
        <begin position="1"/>
        <end position="704"/>
    </location>
</feature>
<feature type="domain" description="tr-type G">
    <location>
        <begin position="8"/>
        <end position="290"/>
    </location>
</feature>
<feature type="binding site" evidence="1">
    <location>
        <begin position="17"/>
        <end position="24"/>
    </location>
    <ligand>
        <name>GTP</name>
        <dbReference type="ChEBI" id="CHEBI:37565"/>
    </ligand>
</feature>
<feature type="binding site" evidence="1">
    <location>
        <begin position="88"/>
        <end position="92"/>
    </location>
    <ligand>
        <name>GTP</name>
        <dbReference type="ChEBI" id="CHEBI:37565"/>
    </ligand>
</feature>
<feature type="binding site" evidence="1">
    <location>
        <begin position="142"/>
        <end position="145"/>
    </location>
    <ligand>
        <name>GTP</name>
        <dbReference type="ChEBI" id="CHEBI:37565"/>
    </ligand>
</feature>
<comment type="function">
    <text evidence="1">Catalyzes the GTP-dependent ribosomal translocation step during translation elongation. During this step, the ribosome changes from the pre-translocational (PRE) to the post-translocational (POST) state as the newly formed A-site-bound peptidyl-tRNA and P-site-bound deacylated tRNA move to the P and E sites, respectively. Catalyzes the coordinated movement of the two tRNA molecules, the mRNA and conformational changes in the ribosome.</text>
</comment>
<comment type="subcellular location">
    <subcellularLocation>
        <location evidence="1">Cytoplasm</location>
    </subcellularLocation>
</comment>
<comment type="similarity">
    <text evidence="1">Belongs to the TRAFAC class translation factor GTPase superfamily. Classic translation factor GTPase family. EF-G/EF-2 subfamily.</text>
</comment>
<accession>A7MKJ6</accession>
<protein>
    <recommendedName>
        <fullName evidence="1">Elongation factor G</fullName>
        <shortName evidence="1">EF-G</shortName>
    </recommendedName>
</protein>
<proteinExistence type="inferred from homology"/>
<dbReference type="EMBL" id="CP000783">
    <property type="protein sequence ID" value="ABU79580.1"/>
    <property type="molecule type" value="Genomic_DNA"/>
</dbReference>
<dbReference type="RefSeq" id="WP_004386616.1">
    <property type="nucleotide sequence ID" value="NC_009778.1"/>
</dbReference>
<dbReference type="SMR" id="A7MKJ6"/>
<dbReference type="GeneID" id="56732995"/>
<dbReference type="KEGG" id="esa:ESA_04401"/>
<dbReference type="HOGENOM" id="CLU_002794_4_1_6"/>
<dbReference type="Proteomes" id="UP000000260">
    <property type="component" value="Chromosome"/>
</dbReference>
<dbReference type="GO" id="GO:0005737">
    <property type="term" value="C:cytoplasm"/>
    <property type="evidence" value="ECO:0007669"/>
    <property type="project" value="UniProtKB-SubCell"/>
</dbReference>
<dbReference type="GO" id="GO:0005525">
    <property type="term" value="F:GTP binding"/>
    <property type="evidence" value="ECO:0007669"/>
    <property type="project" value="UniProtKB-UniRule"/>
</dbReference>
<dbReference type="GO" id="GO:0003924">
    <property type="term" value="F:GTPase activity"/>
    <property type="evidence" value="ECO:0007669"/>
    <property type="project" value="InterPro"/>
</dbReference>
<dbReference type="GO" id="GO:0097216">
    <property type="term" value="F:guanosine tetraphosphate binding"/>
    <property type="evidence" value="ECO:0007669"/>
    <property type="project" value="UniProtKB-ARBA"/>
</dbReference>
<dbReference type="GO" id="GO:0003746">
    <property type="term" value="F:translation elongation factor activity"/>
    <property type="evidence" value="ECO:0007669"/>
    <property type="project" value="UniProtKB-UniRule"/>
</dbReference>
<dbReference type="GO" id="GO:0032790">
    <property type="term" value="P:ribosome disassembly"/>
    <property type="evidence" value="ECO:0007669"/>
    <property type="project" value="TreeGrafter"/>
</dbReference>
<dbReference type="CDD" id="cd01886">
    <property type="entry name" value="EF-G"/>
    <property type="match status" value="1"/>
</dbReference>
<dbReference type="CDD" id="cd16262">
    <property type="entry name" value="EFG_III"/>
    <property type="match status" value="1"/>
</dbReference>
<dbReference type="CDD" id="cd01434">
    <property type="entry name" value="EFG_mtEFG1_IV"/>
    <property type="match status" value="1"/>
</dbReference>
<dbReference type="CDD" id="cd03713">
    <property type="entry name" value="EFG_mtEFG_C"/>
    <property type="match status" value="1"/>
</dbReference>
<dbReference type="CDD" id="cd04088">
    <property type="entry name" value="EFG_mtEFG_II"/>
    <property type="match status" value="1"/>
</dbReference>
<dbReference type="FunFam" id="2.40.30.10:FF:000006">
    <property type="entry name" value="Elongation factor G"/>
    <property type="match status" value="1"/>
</dbReference>
<dbReference type="FunFam" id="3.30.230.10:FF:000003">
    <property type="entry name" value="Elongation factor G"/>
    <property type="match status" value="1"/>
</dbReference>
<dbReference type="FunFam" id="3.30.70.240:FF:000001">
    <property type="entry name" value="Elongation factor G"/>
    <property type="match status" value="1"/>
</dbReference>
<dbReference type="FunFam" id="3.30.70.870:FF:000001">
    <property type="entry name" value="Elongation factor G"/>
    <property type="match status" value="1"/>
</dbReference>
<dbReference type="FunFam" id="3.40.50.300:FF:000029">
    <property type="entry name" value="Elongation factor G"/>
    <property type="match status" value="1"/>
</dbReference>
<dbReference type="Gene3D" id="3.30.230.10">
    <property type="match status" value="1"/>
</dbReference>
<dbReference type="Gene3D" id="3.30.70.240">
    <property type="match status" value="1"/>
</dbReference>
<dbReference type="Gene3D" id="3.30.70.870">
    <property type="entry name" value="Elongation Factor G (Translational Gtpase), domain 3"/>
    <property type="match status" value="1"/>
</dbReference>
<dbReference type="Gene3D" id="3.40.50.300">
    <property type="entry name" value="P-loop containing nucleotide triphosphate hydrolases"/>
    <property type="match status" value="1"/>
</dbReference>
<dbReference type="Gene3D" id="2.40.30.10">
    <property type="entry name" value="Translation factors"/>
    <property type="match status" value="1"/>
</dbReference>
<dbReference type="HAMAP" id="MF_00054_B">
    <property type="entry name" value="EF_G_EF_2_B"/>
    <property type="match status" value="1"/>
</dbReference>
<dbReference type="InterPro" id="IPR041095">
    <property type="entry name" value="EFG_II"/>
</dbReference>
<dbReference type="InterPro" id="IPR009022">
    <property type="entry name" value="EFG_III"/>
</dbReference>
<dbReference type="InterPro" id="IPR035647">
    <property type="entry name" value="EFG_III/V"/>
</dbReference>
<dbReference type="InterPro" id="IPR047872">
    <property type="entry name" value="EFG_IV"/>
</dbReference>
<dbReference type="InterPro" id="IPR035649">
    <property type="entry name" value="EFG_V"/>
</dbReference>
<dbReference type="InterPro" id="IPR000640">
    <property type="entry name" value="EFG_V-like"/>
</dbReference>
<dbReference type="InterPro" id="IPR004161">
    <property type="entry name" value="EFTu-like_2"/>
</dbReference>
<dbReference type="InterPro" id="IPR031157">
    <property type="entry name" value="G_TR_CS"/>
</dbReference>
<dbReference type="InterPro" id="IPR027417">
    <property type="entry name" value="P-loop_NTPase"/>
</dbReference>
<dbReference type="InterPro" id="IPR020568">
    <property type="entry name" value="Ribosomal_Su5_D2-typ_SF"/>
</dbReference>
<dbReference type="InterPro" id="IPR014721">
    <property type="entry name" value="Ribsml_uS5_D2-typ_fold_subgr"/>
</dbReference>
<dbReference type="InterPro" id="IPR005225">
    <property type="entry name" value="Small_GTP-bd"/>
</dbReference>
<dbReference type="InterPro" id="IPR000795">
    <property type="entry name" value="T_Tr_GTP-bd_dom"/>
</dbReference>
<dbReference type="InterPro" id="IPR009000">
    <property type="entry name" value="Transl_B-barrel_sf"/>
</dbReference>
<dbReference type="InterPro" id="IPR004540">
    <property type="entry name" value="Transl_elong_EFG/EF2"/>
</dbReference>
<dbReference type="InterPro" id="IPR005517">
    <property type="entry name" value="Transl_elong_EFG/EF2_IV"/>
</dbReference>
<dbReference type="NCBIfam" id="TIGR00484">
    <property type="entry name" value="EF-G"/>
    <property type="match status" value="1"/>
</dbReference>
<dbReference type="NCBIfam" id="NF009381">
    <property type="entry name" value="PRK12740.1-5"/>
    <property type="match status" value="1"/>
</dbReference>
<dbReference type="NCBIfam" id="TIGR00231">
    <property type="entry name" value="small_GTP"/>
    <property type="match status" value="1"/>
</dbReference>
<dbReference type="PANTHER" id="PTHR43261:SF1">
    <property type="entry name" value="RIBOSOME-RELEASING FACTOR 2, MITOCHONDRIAL"/>
    <property type="match status" value="1"/>
</dbReference>
<dbReference type="PANTHER" id="PTHR43261">
    <property type="entry name" value="TRANSLATION ELONGATION FACTOR G-RELATED"/>
    <property type="match status" value="1"/>
</dbReference>
<dbReference type="Pfam" id="PF00679">
    <property type="entry name" value="EFG_C"/>
    <property type="match status" value="1"/>
</dbReference>
<dbReference type="Pfam" id="PF14492">
    <property type="entry name" value="EFG_III"/>
    <property type="match status" value="1"/>
</dbReference>
<dbReference type="Pfam" id="PF03764">
    <property type="entry name" value="EFG_IV"/>
    <property type="match status" value="1"/>
</dbReference>
<dbReference type="Pfam" id="PF00009">
    <property type="entry name" value="GTP_EFTU"/>
    <property type="match status" value="1"/>
</dbReference>
<dbReference type="Pfam" id="PF03144">
    <property type="entry name" value="GTP_EFTU_D2"/>
    <property type="match status" value="1"/>
</dbReference>
<dbReference type="PRINTS" id="PR00315">
    <property type="entry name" value="ELONGATNFCT"/>
</dbReference>
<dbReference type="SMART" id="SM00838">
    <property type="entry name" value="EFG_C"/>
    <property type="match status" value="1"/>
</dbReference>
<dbReference type="SMART" id="SM00889">
    <property type="entry name" value="EFG_IV"/>
    <property type="match status" value="1"/>
</dbReference>
<dbReference type="SUPFAM" id="SSF54980">
    <property type="entry name" value="EF-G C-terminal domain-like"/>
    <property type="match status" value="2"/>
</dbReference>
<dbReference type="SUPFAM" id="SSF52540">
    <property type="entry name" value="P-loop containing nucleoside triphosphate hydrolases"/>
    <property type="match status" value="1"/>
</dbReference>
<dbReference type="SUPFAM" id="SSF54211">
    <property type="entry name" value="Ribosomal protein S5 domain 2-like"/>
    <property type="match status" value="1"/>
</dbReference>
<dbReference type="SUPFAM" id="SSF50447">
    <property type="entry name" value="Translation proteins"/>
    <property type="match status" value="1"/>
</dbReference>
<dbReference type="PROSITE" id="PS00301">
    <property type="entry name" value="G_TR_1"/>
    <property type="match status" value="1"/>
</dbReference>
<dbReference type="PROSITE" id="PS51722">
    <property type="entry name" value="G_TR_2"/>
    <property type="match status" value="1"/>
</dbReference>
<organism>
    <name type="scientific">Cronobacter sakazakii (strain ATCC BAA-894)</name>
    <name type="common">Enterobacter sakazakii</name>
    <dbReference type="NCBI Taxonomy" id="290339"/>
    <lineage>
        <taxon>Bacteria</taxon>
        <taxon>Pseudomonadati</taxon>
        <taxon>Pseudomonadota</taxon>
        <taxon>Gammaproteobacteria</taxon>
        <taxon>Enterobacterales</taxon>
        <taxon>Enterobacteriaceae</taxon>
        <taxon>Cronobacter</taxon>
    </lineage>
</organism>
<name>EFG_CROS8</name>